<protein>
    <recommendedName>
        <fullName evidence="6">Calcium homeostasis modulator protein</fullName>
    </recommendedName>
</protein>
<sequence length="329" mass="37274">MTTSINSVVTVFQNVFTNHGSTLLNGILIATTVGGQSLVRKLTFSCPCAYPLNIYHSLVFMFGPTAALLLIGITVNSTTWKLAHGFFFRVRDTRHSWKTTCVSWIEVLIQSSVAPIAWLFVVFLDGGYYRCYRSHEFCLISDAILCKNSTILNSYASTSSFNKISDNGKYCPPCICVPNPTDASYLEAESQIYAWGLLLFSGVAAFLVITCNRMCDKYTLVQRQYVETYKNVETQKFDAVAKEHASQLAEHNARAFFGQKDWTKRDWDWVSGIPEVNNPLFARLRLIAAEKTQQTMYTPLQLWNDNKGYRIPQPDLQLTQIIVDETKED</sequence>
<reference evidence="5" key="1">
    <citation type="journal article" date="1998" name="Science">
        <title>Genome sequence of the nematode C. elegans: a platform for investigating biology.</title>
        <authorList>
            <consortium name="The C. elegans sequencing consortium"/>
        </authorList>
    </citation>
    <scope>NUCLEOTIDE SEQUENCE [LARGE SCALE GENOMIC DNA]</scope>
    <source>
        <strain evidence="5">Bristol N2</strain>
    </source>
</reference>
<reference evidence="4" key="2">
    <citation type="journal article" date="2013" name="J. Neurosci.">
        <title>CLHM-1 is a functionally conserved and conditionally toxic Ca2+-permeable ion channel in Caenorhabditis elegans.</title>
        <authorList>
            <person name="Tanis J.E."/>
            <person name="Ma Z."/>
            <person name="Krajacic P."/>
            <person name="He L."/>
            <person name="Foskett J.K."/>
            <person name="Lamitina T."/>
        </authorList>
    </citation>
    <scope>FUNCTION</scope>
    <scope>SUBCELLULAR LOCATION</scope>
    <scope>TISSUE SPECIFICITY</scope>
    <scope>DISRUPTION PHENOTYPE</scope>
    <scope>MUTAGENESIS OF ASP-125</scope>
</reference>
<gene>
    <name evidence="6" type="primary">clhm-1</name>
    <name evidence="6" type="ORF">C44B7.4</name>
</gene>
<keyword id="KW-0002">3D-structure</keyword>
<keyword id="KW-0106">Calcium</keyword>
<keyword id="KW-0107">Calcium channel</keyword>
<keyword id="KW-0109">Calcium transport</keyword>
<keyword id="KW-1003">Cell membrane</keyword>
<keyword id="KW-0325">Glycoprotein</keyword>
<keyword id="KW-0407">Ion channel</keyword>
<keyword id="KW-0406">Ion transport</keyword>
<keyword id="KW-0472">Membrane</keyword>
<keyword id="KW-1185">Reference proteome</keyword>
<keyword id="KW-0812">Transmembrane</keyword>
<keyword id="KW-1133">Transmembrane helix</keyword>
<keyword id="KW-0813">Transport</keyword>
<keyword id="KW-0851">Voltage-gated channel</keyword>
<comment type="function">
    <text evidence="3">Pore-forming subunit of a voltage-gated ion channel. Permeable to monovalent cations, divalent cations and anions with selectivity Ca(2+) &gt; Mg(2+) &gt; Na(+) = K(+) &gt; Cl(-). Acts both as a voltage-gated and calcium-activated ion channel. Required for normal locomotion.</text>
</comment>
<comment type="subcellular location">
    <subcellularLocation>
        <location evidence="3">Cell membrane</location>
        <topology evidence="1">Multi-pass membrane protein</topology>
    </subcellularLocation>
</comment>
<comment type="tissue specificity">
    <text evidence="3">Expressed in head and body wall muscles, IL2, ASG, ASI, ASJ, PHA and PHB sensory neurons, and spermatheca.</text>
</comment>
<comment type="disruption phenotype">
    <text evidence="3">Uncoordinated locomotion with mutants showing reduced forward velocity, muscle force and power production.</text>
</comment>
<comment type="similarity">
    <text evidence="4">Belongs to the CALHM family.</text>
</comment>
<organism evidence="5">
    <name type="scientific">Caenorhabditis elegans</name>
    <dbReference type="NCBI Taxonomy" id="6239"/>
    <lineage>
        <taxon>Eukaryota</taxon>
        <taxon>Metazoa</taxon>
        <taxon>Ecdysozoa</taxon>
        <taxon>Nematoda</taxon>
        <taxon>Chromadorea</taxon>
        <taxon>Rhabditida</taxon>
        <taxon>Rhabditina</taxon>
        <taxon>Rhabditomorpha</taxon>
        <taxon>Rhabditoidea</taxon>
        <taxon>Rhabditidae</taxon>
        <taxon>Peloderinae</taxon>
        <taxon>Caenorhabditis</taxon>
    </lineage>
</organism>
<evidence type="ECO:0000255" key="1"/>
<evidence type="ECO:0000255" key="2">
    <source>
        <dbReference type="PROSITE-ProRule" id="PRU00498"/>
    </source>
</evidence>
<evidence type="ECO:0000269" key="3">
    <source>
    </source>
</evidence>
<evidence type="ECO:0000305" key="4"/>
<evidence type="ECO:0000312" key="5">
    <source>
        <dbReference type="Proteomes" id="UP000001940"/>
    </source>
</evidence>
<evidence type="ECO:0000312" key="6">
    <source>
        <dbReference type="WormBase" id="C44B7.4"/>
    </source>
</evidence>
<name>CLHM1_CAEEL</name>
<dbReference type="EMBL" id="BX284602">
    <property type="protein sequence ID" value="CCD61557.1"/>
    <property type="molecule type" value="Genomic_DNA"/>
</dbReference>
<dbReference type="PIR" id="T15797">
    <property type="entry name" value="T15797"/>
</dbReference>
<dbReference type="RefSeq" id="NP_495403.2">
    <property type="nucleotide sequence ID" value="NM_063002.6"/>
</dbReference>
<dbReference type="PDB" id="6LMV">
    <property type="method" value="EM"/>
    <property type="resolution" value="3.60 A"/>
    <property type="chains" value="A/B/C/D/E/F/G/H/I=1-329"/>
</dbReference>
<dbReference type="PDB" id="6LOM">
    <property type="method" value="EM"/>
    <property type="resolution" value="3.73 A"/>
    <property type="chains" value="A/B/C/D/E/F/G/H/I/J/K/L/M/N/O/P/Q/R/S/T=1-329"/>
</dbReference>
<dbReference type="PDBsum" id="6LMV"/>
<dbReference type="PDBsum" id="6LOM"/>
<dbReference type="EMDB" id="EMD-0921"/>
<dbReference type="EMDB" id="EMD-0938"/>
<dbReference type="SMR" id="Q18593"/>
<dbReference type="FunCoup" id="Q18593">
    <property type="interactions" value="34"/>
</dbReference>
<dbReference type="STRING" id="6239.C44B7.4.1"/>
<dbReference type="TCDB" id="1.A.84.1.4">
    <property type="family name" value="the calcium homeostasis modulator ca(2+) channel (calhm-c) family"/>
</dbReference>
<dbReference type="GlyCosmos" id="Q18593">
    <property type="glycosylation" value="1 site, No reported glycans"/>
</dbReference>
<dbReference type="PaxDb" id="6239-C44B7.4"/>
<dbReference type="EnsemblMetazoa" id="C44B7.4.1">
    <property type="protein sequence ID" value="C44B7.4.1"/>
    <property type="gene ID" value="WBGene00016626"/>
</dbReference>
<dbReference type="GeneID" id="183429"/>
<dbReference type="KEGG" id="cel:CELE_C44B7.4"/>
<dbReference type="UCSC" id="C44B7.4">
    <property type="organism name" value="c. elegans"/>
</dbReference>
<dbReference type="AGR" id="WB:WBGene00016626"/>
<dbReference type="CTD" id="183429"/>
<dbReference type="WormBase" id="C44B7.4">
    <property type="protein sequence ID" value="CE34753"/>
    <property type="gene ID" value="WBGene00016626"/>
    <property type="gene designation" value="clhm-1"/>
</dbReference>
<dbReference type="eggNOG" id="ENOG502QSG7">
    <property type="taxonomic scope" value="Eukaryota"/>
</dbReference>
<dbReference type="GeneTree" id="ENSGT01030000234610"/>
<dbReference type="HOGENOM" id="CLU_073171_0_0_1"/>
<dbReference type="InParanoid" id="Q18593"/>
<dbReference type="OMA" id="WNTLYGG"/>
<dbReference type="OrthoDB" id="5953668at2759"/>
<dbReference type="PhylomeDB" id="Q18593"/>
<dbReference type="PRO" id="PR:Q18593"/>
<dbReference type="Proteomes" id="UP000001940">
    <property type="component" value="Chromosome II"/>
</dbReference>
<dbReference type="Bgee" id="WBGene00016626">
    <property type="expression patterns" value="Expressed in larva and 3 other cell types or tissues"/>
</dbReference>
<dbReference type="GO" id="GO:0034702">
    <property type="term" value="C:monoatomic ion channel complex"/>
    <property type="evidence" value="ECO:0007669"/>
    <property type="project" value="UniProtKB-KW"/>
</dbReference>
<dbReference type="GO" id="GO:0097730">
    <property type="term" value="C:non-motile cilium"/>
    <property type="evidence" value="ECO:0000314"/>
    <property type="project" value="WormBase"/>
</dbReference>
<dbReference type="GO" id="GO:0005886">
    <property type="term" value="C:plasma membrane"/>
    <property type="evidence" value="ECO:0000314"/>
    <property type="project" value="WormBase"/>
</dbReference>
<dbReference type="GO" id="GO:0005261">
    <property type="term" value="F:monoatomic cation channel activity"/>
    <property type="evidence" value="ECO:0000318"/>
    <property type="project" value="GO_Central"/>
</dbReference>
<dbReference type="GO" id="GO:0005245">
    <property type="term" value="F:voltage-gated calcium channel activity"/>
    <property type="evidence" value="ECO:0000314"/>
    <property type="project" value="WormBase"/>
</dbReference>
<dbReference type="GO" id="GO:1904669">
    <property type="term" value="P:ATP export"/>
    <property type="evidence" value="ECO:0000314"/>
    <property type="project" value="UniProtKB"/>
</dbReference>
<dbReference type="GO" id="GO:0070588">
    <property type="term" value="P:calcium ion transmembrane transport"/>
    <property type="evidence" value="ECO:0000314"/>
    <property type="project" value="WormBase"/>
</dbReference>
<dbReference type="GO" id="GO:0040012">
    <property type="term" value="P:regulation of locomotion"/>
    <property type="evidence" value="ECO:0000315"/>
    <property type="project" value="WormBase"/>
</dbReference>
<dbReference type="InterPro" id="IPR029569">
    <property type="entry name" value="CALHM"/>
</dbReference>
<dbReference type="PANTHER" id="PTHR32261">
    <property type="entry name" value="CALCIUM HOMEOSTASIS MODULATOR PROTEIN"/>
    <property type="match status" value="1"/>
</dbReference>
<dbReference type="PANTHER" id="PTHR32261:SF1">
    <property type="entry name" value="CALCIUM HOMEOSTASIS MODULATOR PROTEIN"/>
    <property type="match status" value="1"/>
</dbReference>
<dbReference type="Pfam" id="PF14798">
    <property type="entry name" value="Ca_hom_mod"/>
    <property type="match status" value="1"/>
</dbReference>
<feature type="chain" id="PRO_0000438169" description="Calcium homeostasis modulator protein" evidence="4">
    <location>
        <begin position="1"/>
        <end position="329"/>
    </location>
</feature>
<feature type="topological domain" description="Cytoplasmic" evidence="4">
    <location>
        <begin position="1"/>
        <end position="14"/>
    </location>
</feature>
<feature type="transmembrane region" description="Helical" evidence="1">
    <location>
        <begin position="15"/>
        <end position="35"/>
    </location>
</feature>
<feature type="topological domain" description="Extracellular" evidence="4">
    <location>
        <begin position="36"/>
        <end position="53"/>
    </location>
</feature>
<feature type="transmembrane region" description="Helical" evidence="1">
    <location>
        <begin position="54"/>
        <end position="74"/>
    </location>
</feature>
<feature type="topological domain" description="Cytoplasmic" evidence="4">
    <location>
        <begin position="75"/>
        <end position="103"/>
    </location>
</feature>
<feature type="transmembrane region" description="Helical" evidence="1">
    <location>
        <begin position="104"/>
        <end position="124"/>
    </location>
</feature>
<feature type="topological domain" description="Extracellular" evidence="4">
    <location>
        <begin position="125"/>
        <end position="191"/>
    </location>
</feature>
<feature type="transmembrane region" description="Helical" evidence="1">
    <location>
        <begin position="192"/>
        <end position="212"/>
    </location>
</feature>
<feature type="topological domain" description="Cytoplasmic" evidence="4">
    <location>
        <begin position="213"/>
        <end position="329"/>
    </location>
</feature>
<feature type="glycosylation site" description="N-linked (GlcNAc...) asparagine" evidence="2">
    <location>
        <position position="148"/>
    </location>
</feature>
<feature type="mutagenesis site" description="Changes relative Ca2+ and Cl-permeabilities." evidence="3">
    <original>D</original>
    <variation>A</variation>
    <location>
        <position position="125"/>
    </location>
</feature>
<proteinExistence type="evidence at protein level"/>
<accession>Q18593</accession>